<comment type="function">
    <text evidence="2">With S4 and S5 plays an important role in translational accuracy.</text>
</comment>
<comment type="function">
    <text evidence="2">Interacts with and stabilizes bases of the 16S rRNA that are involved in tRNA selection in the A site and with the mRNA backbone. Located at the interface of the 30S and 50S subunits, it traverses the body of the 30S subunit contacting proteins on the other side and probably holding the rRNA structure together. The combined cluster of proteins S8, S12 and S17 appears to hold together the shoulder and platform of the 30S subunit.</text>
</comment>
<comment type="subunit">
    <text evidence="2">Part of the 30S ribosomal subunit. Contacts proteins S8 and S17. May interact with IF1 in the 30S initiation complex.</text>
</comment>
<comment type="similarity">
    <text evidence="2">Belongs to the universal ribosomal protein uS12 family.</text>
</comment>
<reference key="1">
    <citation type="journal article" date="2001" name="J. Bacteriol.">
        <title>Genome of the bacterium Streptococcus pneumoniae strain R6.</title>
        <authorList>
            <person name="Hoskins J."/>
            <person name="Alborn W.E. Jr."/>
            <person name="Arnold J."/>
            <person name="Blaszczak L.C."/>
            <person name="Burgett S."/>
            <person name="DeHoff B.S."/>
            <person name="Estrem S.T."/>
            <person name="Fritz L."/>
            <person name="Fu D.-J."/>
            <person name="Fuller W."/>
            <person name="Geringer C."/>
            <person name="Gilmour R."/>
            <person name="Glass J.S."/>
            <person name="Khoja H."/>
            <person name="Kraft A.R."/>
            <person name="Lagace R.E."/>
            <person name="LeBlanc D.J."/>
            <person name="Lee L.N."/>
            <person name="Lefkowitz E.J."/>
            <person name="Lu J."/>
            <person name="Matsushima P."/>
            <person name="McAhren S.M."/>
            <person name="McHenney M."/>
            <person name="McLeaster K."/>
            <person name="Mundy C.W."/>
            <person name="Nicas T.I."/>
            <person name="Norris F.H."/>
            <person name="O'Gara M."/>
            <person name="Peery R.B."/>
            <person name="Robertson G.T."/>
            <person name="Rockey P."/>
            <person name="Sun P.-M."/>
            <person name="Winkler M.E."/>
            <person name="Yang Y."/>
            <person name="Young-Bellido M."/>
            <person name="Zhao G."/>
            <person name="Zook C.A."/>
            <person name="Baltz R.H."/>
            <person name="Jaskunas S.R."/>
            <person name="Rosteck P.R. Jr."/>
            <person name="Skatrud P.L."/>
            <person name="Glass J.I."/>
        </authorList>
    </citation>
    <scope>NUCLEOTIDE SEQUENCE [LARGE SCALE GENOMIC DNA]</scope>
    <source>
        <strain>ATCC BAA-255 / R6</strain>
    </source>
</reference>
<sequence length="137" mass="15144">MPTINQLVRKPRKSKVEKSKSPALNVGYNSHKKVQTNVSSPQKRGVATRVGTMTPKKPNSALRKFARVRLSNLIEVTAYIPGIGHNLQEHSVVLLRGGRVKDLPGVRYHIVRGALDTAGVNDRKQGRSKYGTKRPKA</sequence>
<proteinExistence type="inferred from homology"/>
<keyword id="KW-0488">Methylation</keyword>
<keyword id="KW-1185">Reference proteome</keyword>
<keyword id="KW-0687">Ribonucleoprotein</keyword>
<keyword id="KW-0689">Ribosomal protein</keyword>
<keyword id="KW-0694">RNA-binding</keyword>
<keyword id="KW-0699">rRNA-binding</keyword>
<keyword id="KW-0820">tRNA-binding</keyword>
<dbReference type="EMBL" id="AE007317">
    <property type="protein sequence ID" value="AAK99052.1"/>
    <property type="molecule type" value="Genomic_DNA"/>
</dbReference>
<dbReference type="PIR" id="H97902">
    <property type="entry name" value="H97902"/>
</dbReference>
<dbReference type="RefSeq" id="NP_357842.1">
    <property type="nucleotide sequence ID" value="NC_003098.1"/>
</dbReference>
<dbReference type="RefSeq" id="WP_001142332.1">
    <property type="nucleotide sequence ID" value="NC_003098.1"/>
</dbReference>
<dbReference type="SMR" id="P0A4A8"/>
<dbReference type="STRING" id="171101.spr0248"/>
<dbReference type="GeneID" id="93922571"/>
<dbReference type="KEGG" id="spr:spr0248"/>
<dbReference type="PATRIC" id="fig|171101.6.peg.283"/>
<dbReference type="eggNOG" id="COG0048">
    <property type="taxonomic scope" value="Bacteria"/>
</dbReference>
<dbReference type="HOGENOM" id="CLU_104295_1_2_9"/>
<dbReference type="PRO" id="PR:P0A4A8"/>
<dbReference type="Proteomes" id="UP000000586">
    <property type="component" value="Chromosome"/>
</dbReference>
<dbReference type="GO" id="GO:0005840">
    <property type="term" value="C:ribosome"/>
    <property type="evidence" value="ECO:0000318"/>
    <property type="project" value="GO_Central"/>
</dbReference>
<dbReference type="GO" id="GO:0015935">
    <property type="term" value="C:small ribosomal subunit"/>
    <property type="evidence" value="ECO:0007669"/>
    <property type="project" value="InterPro"/>
</dbReference>
<dbReference type="GO" id="GO:0019843">
    <property type="term" value="F:rRNA binding"/>
    <property type="evidence" value="ECO:0007669"/>
    <property type="project" value="UniProtKB-UniRule"/>
</dbReference>
<dbReference type="GO" id="GO:0003735">
    <property type="term" value="F:structural constituent of ribosome"/>
    <property type="evidence" value="ECO:0000318"/>
    <property type="project" value="GO_Central"/>
</dbReference>
<dbReference type="GO" id="GO:0000049">
    <property type="term" value="F:tRNA binding"/>
    <property type="evidence" value="ECO:0007669"/>
    <property type="project" value="UniProtKB-UniRule"/>
</dbReference>
<dbReference type="GO" id="GO:0006412">
    <property type="term" value="P:translation"/>
    <property type="evidence" value="ECO:0000318"/>
    <property type="project" value="GO_Central"/>
</dbReference>
<dbReference type="CDD" id="cd03368">
    <property type="entry name" value="Ribosomal_S12"/>
    <property type="match status" value="1"/>
</dbReference>
<dbReference type="FunFam" id="2.40.50.140:FF:000001">
    <property type="entry name" value="30S ribosomal protein S12"/>
    <property type="match status" value="1"/>
</dbReference>
<dbReference type="Gene3D" id="2.40.50.140">
    <property type="entry name" value="Nucleic acid-binding proteins"/>
    <property type="match status" value="1"/>
</dbReference>
<dbReference type="HAMAP" id="MF_00403_B">
    <property type="entry name" value="Ribosomal_uS12_B"/>
    <property type="match status" value="1"/>
</dbReference>
<dbReference type="InterPro" id="IPR012340">
    <property type="entry name" value="NA-bd_OB-fold"/>
</dbReference>
<dbReference type="InterPro" id="IPR006032">
    <property type="entry name" value="Ribosomal_uS12"/>
</dbReference>
<dbReference type="InterPro" id="IPR005679">
    <property type="entry name" value="Ribosomal_uS12_bac"/>
</dbReference>
<dbReference type="NCBIfam" id="TIGR00981">
    <property type="entry name" value="rpsL_bact"/>
    <property type="match status" value="1"/>
</dbReference>
<dbReference type="PANTHER" id="PTHR11652">
    <property type="entry name" value="30S RIBOSOMAL PROTEIN S12 FAMILY MEMBER"/>
    <property type="match status" value="1"/>
</dbReference>
<dbReference type="Pfam" id="PF00164">
    <property type="entry name" value="Ribosom_S12_S23"/>
    <property type="match status" value="1"/>
</dbReference>
<dbReference type="PIRSF" id="PIRSF002133">
    <property type="entry name" value="Ribosomal_S12/S23"/>
    <property type="match status" value="1"/>
</dbReference>
<dbReference type="PRINTS" id="PR01034">
    <property type="entry name" value="RIBOSOMALS12"/>
</dbReference>
<dbReference type="SUPFAM" id="SSF50249">
    <property type="entry name" value="Nucleic acid-binding proteins"/>
    <property type="match status" value="1"/>
</dbReference>
<dbReference type="PROSITE" id="PS00055">
    <property type="entry name" value="RIBOSOMAL_S12"/>
    <property type="match status" value="1"/>
</dbReference>
<evidence type="ECO:0000250" key="1"/>
<evidence type="ECO:0000255" key="2">
    <source>
        <dbReference type="HAMAP-Rule" id="MF_00403"/>
    </source>
</evidence>
<evidence type="ECO:0000256" key="3">
    <source>
        <dbReference type="SAM" id="MobiDB-lite"/>
    </source>
</evidence>
<evidence type="ECO:0000305" key="4"/>
<gene>
    <name evidence="2" type="primary">rpsL</name>
    <name type="synonym">str</name>
    <name type="ordered locus">spr0248</name>
</gene>
<accession>P0A4A8</accession>
<accession>P30891</accession>
<protein>
    <recommendedName>
        <fullName evidence="2">Small ribosomal subunit protein uS12</fullName>
    </recommendedName>
    <alternativeName>
        <fullName evidence="4">30S ribosomal protein S12</fullName>
    </alternativeName>
</protein>
<name>RS12_STRR6</name>
<feature type="chain" id="PRO_0000146326" description="Small ribosomal subunit protein uS12">
    <location>
        <begin position="1"/>
        <end position="137"/>
    </location>
</feature>
<feature type="region of interest" description="Disordered" evidence="3">
    <location>
        <begin position="1"/>
        <end position="57"/>
    </location>
</feature>
<feature type="modified residue" description="3-methylthioaspartic acid" evidence="1">
    <location>
        <position position="102"/>
    </location>
</feature>
<organism>
    <name type="scientific">Streptococcus pneumoniae (strain ATCC BAA-255 / R6)</name>
    <dbReference type="NCBI Taxonomy" id="171101"/>
    <lineage>
        <taxon>Bacteria</taxon>
        <taxon>Bacillati</taxon>
        <taxon>Bacillota</taxon>
        <taxon>Bacilli</taxon>
        <taxon>Lactobacillales</taxon>
        <taxon>Streptococcaceae</taxon>
        <taxon>Streptococcus</taxon>
    </lineage>
</organism>